<keyword id="KW-1003">Cell membrane</keyword>
<keyword id="KW-0472">Membrane</keyword>
<keyword id="KW-1185">Reference proteome</keyword>
<keyword id="KW-0812">Transmembrane</keyword>
<keyword id="KW-1133">Transmembrane helix</keyword>
<organism>
    <name type="scientific">Bacillus licheniformis (strain ATCC 14580 / DSM 13 / JCM 2505 / CCUG 7422 / NBRC 12200 / NCIMB 9375 / NCTC 10341 / NRRL NRS-1264 / Gibson 46)</name>
    <dbReference type="NCBI Taxonomy" id="279010"/>
    <lineage>
        <taxon>Bacteria</taxon>
        <taxon>Bacillati</taxon>
        <taxon>Bacillota</taxon>
        <taxon>Bacilli</taxon>
        <taxon>Bacillales</taxon>
        <taxon>Bacillaceae</taxon>
        <taxon>Bacillus</taxon>
    </lineage>
</organism>
<accession>Q65LI4</accession>
<accession>Q62WX5</accession>
<protein>
    <recommendedName>
        <fullName evidence="1">UPF0344 protein BLi01172/BL01343</fullName>
    </recommendedName>
</protein>
<feature type="chain" id="PRO_0000105884" description="UPF0344 protein BLi01172/BL01343">
    <location>
        <begin position="1"/>
        <end position="118"/>
    </location>
</feature>
<feature type="transmembrane region" description="Helical" evidence="1">
    <location>
        <begin position="6"/>
        <end position="26"/>
    </location>
</feature>
<feature type="transmembrane region" description="Helical" evidence="1">
    <location>
        <begin position="33"/>
        <end position="53"/>
    </location>
</feature>
<feature type="transmembrane region" description="Helical" evidence="1">
    <location>
        <begin position="62"/>
        <end position="82"/>
    </location>
</feature>
<feature type="transmembrane region" description="Helical" evidence="1">
    <location>
        <begin position="89"/>
        <end position="109"/>
    </location>
</feature>
<reference key="1">
    <citation type="journal article" date="2004" name="J. Mol. Microbiol. Biotechnol.">
        <title>The complete genome sequence of Bacillus licheniformis DSM13, an organism with great industrial potential.</title>
        <authorList>
            <person name="Veith B."/>
            <person name="Herzberg C."/>
            <person name="Steckel S."/>
            <person name="Feesche J."/>
            <person name="Maurer K.H."/>
            <person name="Ehrenreich P."/>
            <person name="Baeumer S."/>
            <person name="Henne A."/>
            <person name="Liesegang H."/>
            <person name="Merkl R."/>
            <person name="Ehrenreich A."/>
            <person name="Gottschalk G."/>
        </authorList>
    </citation>
    <scope>NUCLEOTIDE SEQUENCE [LARGE SCALE GENOMIC DNA]</scope>
    <source>
        <strain>ATCC 14580 / DSM 13 / JCM 2505 / CCUG 7422 / NBRC 12200 / NCIMB 9375 / NCTC 10341 / NRRL NRS-1264 / Gibson 46</strain>
    </source>
</reference>
<reference key="2">
    <citation type="journal article" date="2004" name="Genome Biol.">
        <title>Complete genome sequence of the industrial bacterium Bacillus licheniformis and comparisons with closely related Bacillus species.</title>
        <authorList>
            <person name="Rey M.W."/>
            <person name="Ramaiya P."/>
            <person name="Nelson B.A."/>
            <person name="Brody-Karpin S.D."/>
            <person name="Zaretsky E.J."/>
            <person name="Tang M."/>
            <person name="Lopez de Leon A."/>
            <person name="Xiang H."/>
            <person name="Gusti V."/>
            <person name="Clausen I.G."/>
            <person name="Olsen P.B."/>
            <person name="Rasmussen M.D."/>
            <person name="Andersen J.T."/>
            <person name="Joergensen P.L."/>
            <person name="Larsen T.S."/>
            <person name="Sorokin A."/>
            <person name="Bolotin A."/>
            <person name="Lapidus A."/>
            <person name="Galleron N."/>
            <person name="Ehrlich S.D."/>
            <person name="Berka R.M."/>
        </authorList>
    </citation>
    <scope>NUCLEOTIDE SEQUENCE [LARGE SCALE GENOMIC DNA]</scope>
    <source>
        <strain>ATCC 14580 / DSM 13 / JCM 2505 / CCUG 7422 / NBRC 12200 / NCIMB 9375 / NCTC 10341 / NRRL NRS-1264 / Gibson 46</strain>
    </source>
</reference>
<sequence>MTHMHITSWVIALILVFVAYGLYSSGNSKGAKITHMILRLFYIIVIITGAQLFLKFTAWNGEYIAKALLGLITIGFMEMLLIRRKNGKAATGIWIGFIVVLLLTVVLGLRLPLGFKVF</sequence>
<name>Y1172_BACLD</name>
<evidence type="ECO:0000255" key="1">
    <source>
        <dbReference type="HAMAP-Rule" id="MF_01536"/>
    </source>
</evidence>
<evidence type="ECO:0000305" key="2"/>
<proteinExistence type="inferred from homology"/>
<comment type="subcellular location">
    <subcellularLocation>
        <location evidence="1">Cell membrane</location>
        <topology evidence="1">Multi-pass membrane protein</topology>
    </subcellularLocation>
</comment>
<comment type="similarity">
    <text evidence="1">Belongs to the UPF0344 family.</text>
</comment>
<comment type="sequence caution" evidence="2">
    <conflict type="erroneous initiation">
        <sequence resource="EMBL-CDS" id="AAU40080"/>
    </conflict>
</comment>
<dbReference type="EMBL" id="AE017333">
    <property type="protein sequence ID" value="AAU40080.1"/>
    <property type="status" value="ALT_INIT"/>
    <property type="molecule type" value="Genomic_DNA"/>
</dbReference>
<dbReference type="EMBL" id="CP000002">
    <property type="protein sequence ID" value="AAU22733.1"/>
    <property type="molecule type" value="Genomic_DNA"/>
</dbReference>
<dbReference type="RefSeq" id="WP_011197750.1">
    <property type="nucleotide sequence ID" value="NC_006322.1"/>
</dbReference>
<dbReference type="SMR" id="Q65LI4"/>
<dbReference type="STRING" id="279010.BL01343"/>
<dbReference type="KEGG" id="bld:BLi01172"/>
<dbReference type="KEGG" id="bli:BL01343"/>
<dbReference type="eggNOG" id="ENOG5032W2Q">
    <property type="taxonomic scope" value="Bacteria"/>
</dbReference>
<dbReference type="HOGENOM" id="CLU_146641_1_1_9"/>
<dbReference type="Proteomes" id="UP000000606">
    <property type="component" value="Chromosome"/>
</dbReference>
<dbReference type="GO" id="GO:0005886">
    <property type="term" value="C:plasma membrane"/>
    <property type="evidence" value="ECO:0007669"/>
    <property type="project" value="UniProtKB-SubCell"/>
</dbReference>
<dbReference type="HAMAP" id="MF_01536">
    <property type="entry name" value="UPF0344"/>
    <property type="match status" value="1"/>
</dbReference>
<dbReference type="InterPro" id="IPR010899">
    <property type="entry name" value="UPF0344"/>
</dbReference>
<dbReference type="NCBIfam" id="NF010198">
    <property type="entry name" value="PRK13673.1-5"/>
    <property type="match status" value="1"/>
</dbReference>
<dbReference type="Pfam" id="PF07457">
    <property type="entry name" value="DUF1516"/>
    <property type="match status" value="1"/>
</dbReference>
<gene>
    <name type="ordered locus">BLi01172</name>
    <name type="ordered locus">BL01343</name>
</gene>